<proteinExistence type="inferred from homology"/>
<evidence type="ECO:0000255" key="1">
    <source>
        <dbReference type="HAMAP-Rule" id="MF_00274"/>
    </source>
</evidence>
<evidence type="ECO:0000256" key="2">
    <source>
        <dbReference type="SAM" id="MobiDB-lite"/>
    </source>
</evidence>
<name>Y2594_NITOC</name>
<dbReference type="EMBL" id="CP000127">
    <property type="protein sequence ID" value="ABA59047.1"/>
    <property type="molecule type" value="Genomic_DNA"/>
</dbReference>
<dbReference type="RefSeq" id="WP_004164015.1">
    <property type="nucleotide sequence ID" value="NC_007484.1"/>
</dbReference>
<dbReference type="SMR" id="Q3J7Z9"/>
<dbReference type="FunCoup" id="Q3J7Z9">
    <property type="interactions" value="392"/>
</dbReference>
<dbReference type="STRING" id="323261.Noc_2594"/>
<dbReference type="KEGG" id="noc:Noc_2594"/>
<dbReference type="eggNOG" id="COG0718">
    <property type="taxonomic scope" value="Bacteria"/>
</dbReference>
<dbReference type="HOGENOM" id="CLU_140930_0_0_6"/>
<dbReference type="InParanoid" id="Q3J7Z9"/>
<dbReference type="Proteomes" id="UP000006838">
    <property type="component" value="Chromosome"/>
</dbReference>
<dbReference type="GO" id="GO:0043590">
    <property type="term" value="C:bacterial nucleoid"/>
    <property type="evidence" value="ECO:0007669"/>
    <property type="project" value="UniProtKB-UniRule"/>
</dbReference>
<dbReference type="GO" id="GO:0005829">
    <property type="term" value="C:cytosol"/>
    <property type="evidence" value="ECO:0007669"/>
    <property type="project" value="TreeGrafter"/>
</dbReference>
<dbReference type="GO" id="GO:0003677">
    <property type="term" value="F:DNA binding"/>
    <property type="evidence" value="ECO:0007669"/>
    <property type="project" value="UniProtKB-UniRule"/>
</dbReference>
<dbReference type="Gene3D" id="3.30.1310.10">
    <property type="entry name" value="Nucleoid-associated protein YbaB-like domain"/>
    <property type="match status" value="1"/>
</dbReference>
<dbReference type="HAMAP" id="MF_00274">
    <property type="entry name" value="DNA_YbaB_EbfC"/>
    <property type="match status" value="1"/>
</dbReference>
<dbReference type="InterPro" id="IPR036894">
    <property type="entry name" value="YbaB-like_sf"/>
</dbReference>
<dbReference type="InterPro" id="IPR004401">
    <property type="entry name" value="YbaB/EbfC"/>
</dbReference>
<dbReference type="NCBIfam" id="TIGR00103">
    <property type="entry name" value="DNA_YbaB_EbfC"/>
    <property type="match status" value="1"/>
</dbReference>
<dbReference type="PANTHER" id="PTHR33449">
    <property type="entry name" value="NUCLEOID-ASSOCIATED PROTEIN YBAB"/>
    <property type="match status" value="1"/>
</dbReference>
<dbReference type="PANTHER" id="PTHR33449:SF1">
    <property type="entry name" value="NUCLEOID-ASSOCIATED PROTEIN YBAB"/>
    <property type="match status" value="1"/>
</dbReference>
<dbReference type="Pfam" id="PF02575">
    <property type="entry name" value="YbaB_DNA_bd"/>
    <property type="match status" value="1"/>
</dbReference>
<dbReference type="PIRSF" id="PIRSF004555">
    <property type="entry name" value="UCP004555"/>
    <property type="match status" value="1"/>
</dbReference>
<dbReference type="SUPFAM" id="SSF82607">
    <property type="entry name" value="YbaB-like"/>
    <property type="match status" value="1"/>
</dbReference>
<comment type="function">
    <text evidence="1">Binds to DNA and alters its conformation. May be involved in regulation of gene expression, nucleoid organization and DNA protection.</text>
</comment>
<comment type="subunit">
    <text evidence="1">Homodimer.</text>
</comment>
<comment type="subcellular location">
    <subcellularLocation>
        <location evidence="1">Cytoplasm</location>
        <location evidence="1">Nucleoid</location>
    </subcellularLocation>
</comment>
<comment type="similarity">
    <text evidence="1">Belongs to the YbaB/EbfC family.</text>
</comment>
<gene>
    <name type="ordered locus">Noc_2594</name>
</gene>
<protein>
    <recommendedName>
        <fullName evidence="1">Nucleoid-associated protein Noc_2594</fullName>
    </recommendedName>
</protein>
<accession>Q3J7Z9</accession>
<sequence length="106" mass="11646">MKGGLGNLMKQAQQLQSNMEKAQEELANMEVTGQAGGGMVSIVMTGRYDCRRISIHSELWQEDKEMVEDLVAAAINDAVRQVETQSKEKMSSMTSGMLPPGFKLPL</sequence>
<keyword id="KW-0963">Cytoplasm</keyword>
<keyword id="KW-0238">DNA-binding</keyword>
<keyword id="KW-1185">Reference proteome</keyword>
<feature type="chain" id="PRO_1000059201" description="Nucleoid-associated protein Noc_2594">
    <location>
        <begin position="1"/>
        <end position="106"/>
    </location>
</feature>
<feature type="region of interest" description="Disordered" evidence="2">
    <location>
        <begin position="1"/>
        <end position="20"/>
    </location>
</feature>
<feature type="region of interest" description="Disordered" evidence="2">
    <location>
        <begin position="85"/>
        <end position="106"/>
    </location>
</feature>
<feature type="compositionally biased region" description="Polar residues" evidence="2">
    <location>
        <begin position="10"/>
        <end position="20"/>
    </location>
</feature>
<reference key="1">
    <citation type="journal article" date="2006" name="Appl. Environ. Microbiol.">
        <title>Complete genome sequence of the marine, chemolithoautotrophic, ammonia-oxidizing bacterium Nitrosococcus oceani ATCC 19707.</title>
        <authorList>
            <person name="Klotz M.G."/>
            <person name="Arp D.J."/>
            <person name="Chain P.S.G."/>
            <person name="El-Sheikh A.F."/>
            <person name="Hauser L.J."/>
            <person name="Hommes N.G."/>
            <person name="Larimer F.W."/>
            <person name="Malfatti S.A."/>
            <person name="Norton J.M."/>
            <person name="Poret-Peterson A.T."/>
            <person name="Vergez L.M."/>
            <person name="Ward B.B."/>
        </authorList>
    </citation>
    <scope>NUCLEOTIDE SEQUENCE [LARGE SCALE GENOMIC DNA]</scope>
    <source>
        <strain>ATCC 19707 / BCRC 17464 / JCM 30415 / NCIMB 11848 / C-107</strain>
    </source>
</reference>
<organism>
    <name type="scientific">Nitrosococcus oceani (strain ATCC 19707 / BCRC 17464 / JCM 30415 / NCIMB 11848 / C-107)</name>
    <dbReference type="NCBI Taxonomy" id="323261"/>
    <lineage>
        <taxon>Bacteria</taxon>
        <taxon>Pseudomonadati</taxon>
        <taxon>Pseudomonadota</taxon>
        <taxon>Gammaproteobacteria</taxon>
        <taxon>Chromatiales</taxon>
        <taxon>Chromatiaceae</taxon>
        <taxon>Nitrosococcus</taxon>
    </lineage>
</organism>